<accession>Q5L8V7</accession>
<sequence>MLILLSCAKTMSDVSKTKTPLTTFPGFRKEAAEVALQMSQFSVEELERLLKVNPKIAVENYRRYQAFHSEGTRELPALLAYTGIVFKRVHPQDFSEEDFCYAQDHLRLTSFCYGLLRPLDMIRPYRLEGDVRLPEPGNRTMFDYWKPILTDRFIADIKKAGGVLCNLASDEMRGLFDWKRVEKEVRVITPEFHVWKNGKLATVVVYTKMSRGEMTRYILKNRIESVEQLKTFAWEGFEFNEQLSDETKYVFTNGKTE</sequence>
<reference key="1">
    <citation type="journal article" date="2005" name="Science">
        <title>Extensive DNA inversions in the B. fragilis genome control variable gene expression.</title>
        <authorList>
            <person name="Cerdeno-Tarraga A.-M."/>
            <person name="Patrick S."/>
            <person name="Crossman L.C."/>
            <person name="Blakely G."/>
            <person name="Abratt V."/>
            <person name="Lennard N."/>
            <person name="Poxton I."/>
            <person name="Duerden B."/>
            <person name="Harris B."/>
            <person name="Quail M.A."/>
            <person name="Barron A."/>
            <person name="Clark L."/>
            <person name="Corton C."/>
            <person name="Doggett J."/>
            <person name="Holden M.T.G."/>
            <person name="Larke N."/>
            <person name="Line A."/>
            <person name="Lord A."/>
            <person name="Norbertczak H."/>
            <person name="Ormond D."/>
            <person name="Price C."/>
            <person name="Rabbinowitsch E."/>
            <person name="Woodward J."/>
            <person name="Barrell B.G."/>
            <person name="Parkhill J."/>
        </authorList>
    </citation>
    <scope>NUCLEOTIDE SEQUENCE [LARGE SCALE GENOMIC DNA]</scope>
    <source>
        <strain>ATCC 25285 / DSM 2151 / CCUG 4856 / JCM 11019 / LMG 10263 / NCTC 9343 / Onslow / VPI 2553 / EN-2</strain>
    </source>
</reference>
<feature type="chain" id="PRO_0000261998" description="UPF0246 protein BF3795">
    <location>
        <begin position="1"/>
        <end position="257"/>
    </location>
</feature>
<gene>
    <name type="ordered locus">BF3795</name>
</gene>
<name>Y3795_BACFN</name>
<evidence type="ECO:0000255" key="1">
    <source>
        <dbReference type="HAMAP-Rule" id="MF_00652"/>
    </source>
</evidence>
<evidence type="ECO:0000305" key="2"/>
<organism>
    <name type="scientific">Bacteroides fragilis (strain ATCC 25285 / DSM 2151 / CCUG 4856 / JCM 11019 / LMG 10263 / NCTC 9343 / Onslow / VPI 2553 / EN-2)</name>
    <dbReference type="NCBI Taxonomy" id="272559"/>
    <lineage>
        <taxon>Bacteria</taxon>
        <taxon>Pseudomonadati</taxon>
        <taxon>Bacteroidota</taxon>
        <taxon>Bacteroidia</taxon>
        <taxon>Bacteroidales</taxon>
        <taxon>Bacteroidaceae</taxon>
        <taxon>Bacteroides</taxon>
    </lineage>
</organism>
<protein>
    <recommendedName>
        <fullName evidence="1">UPF0246 protein BF3795</fullName>
    </recommendedName>
</protein>
<dbReference type="EMBL" id="CR626927">
    <property type="protein sequence ID" value="CAH09475.1"/>
    <property type="status" value="ALT_INIT"/>
    <property type="molecule type" value="Genomic_DNA"/>
</dbReference>
<dbReference type="SMR" id="Q5L8V7"/>
<dbReference type="PaxDb" id="272559-BF9343_3694"/>
<dbReference type="KEGG" id="bfs:BF9343_3694"/>
<dbReference type="eggNOG" id="COG3022">
    <property type="taxonomic scope" value="Bacteria"/>
</dbReference>
<dbReference type="HOGENOM" id="CLU_061989_0_1_10"/>
<dbReference type="Proteomes" id="UP000006731">
    <property type="component" value="Chromosome"/>
</dbReference>
<dbReference type="GO" id="GO:0005829">
    <property type="term" value="C:cytosol"/>
    <property type="evidence" value="ECO:0007669"/>
    <property type="project" value="TreeGrafter"/>
</dbReference>
<dbReference type="GO" id="GO:0033194">
    <property type="term" value="P:response to hydroperoxide"/>
    <property type="evidence" value="ECO:0007669"/>
    <property type="project" value="TreeGrafter"/>
</dbReference>
<dbReference type="HAMAP" id="MF_00652">
    <property type="entry name" value="UPF0246"/>
    <property type="match status" value="1"/>
</dbReference>
<dbReference type="InterPro" id="IPR005583">
    <property type="entry name" value="YaaA"/>
</dbReference>
<dbReference type="NCBIfam" id="NF002547">
    <property type="entry name" value="PRK02101.2-5"/>
    <property type="match status" value="1"/>
</dbReference>
<dbReference type="PANTHER" id="PTHR30283:SF4">
    <property type="entry name" value="PEROXIDE STRESS RESISTANCE PROTEIN YAAA"/>
    <property type="match status" value="1"/>
</dbReference>
<dbReference type="PANTHER" id="PTHR30283">
    <property type="entry name" value="PEROXIDE STRESS RESPONSE PROTEIN YAAA"/>
    <property type="match status" value="1"/>
</dbReference>
<dbReference type="Pfam" id="PF03883">
    <property type="entry name" value="H2O2_YaaD"/>
    <property type="match status" value="1"/>
</dbReference>
<comment type="similarity">
    <text evidence="1">Belongs to the UPF0246 family.</text>
</comment>
<comment type="sequence caution" evidence="2">
    <conflict type="erroneous initiation">
        <sequence resource="EMBL-CDS" id="CAH09475"/>
    </conflict>
</comment>
<proteinExistence type="inferred from homology"/>